<feature type="initiator methionine" description="Removed" evidence="1">
    <location>
        <position position="1"/>
    </location>
</feature>
<feature type="chain" id="PRO_0000130954" description="Small ribosomal subunit protein uS14">
    <location>
        <begin position="2"/>
        <end position="61"/>
    </location>
</feature>
<feature type="binding site" evidence="2">
    <location>
        <position position="24"/>
    </location>
    <ligand>
        <name>Zn(2+)</name>
        <dbReference type="ChEBI" id="CHEBI:29105"/>
    </ligand>
</feature>
<feature type="binding site" evidence="2">
    <location>
        <position position="27"/>
    </location>
    <ligand>
        <name>Zn(2+)</name>
        <dbReference type="ChEBI" id="CHEBI:29105"/>
    </ligand>
</feature>
<feature type="binding site" evidence="2">
    <location>
        <position position="40"/>
    </location>
    <ligand>
        <name>Zn(2+)</name>
        <dbReference type="ChEBI" id="CHEBI:29105"/>
    </ligand>
</feature>
<feature type="binding site" evidence="2">
    <location>
        <position position="43"/>
    </location>
    <ligand>
        <name>Zn(2+)</name>
        <dbReference type="ChEBI" id="CHEBI:29105"/>
    </ligand>
</feature>
<feature type="helix" evidence="5">
    <location>
        <begin position="4"/>
        <end position="12"/>
    </location>
</feature>
<feature type="helix" evidence="5">
    <location>
        <begin position="17"/>
        <end position="19"/>
    </location>
</feature>
<feature type="strand" evidence="5">
    <location>
        <begin position="25"/>
        <end position="27"/>
    </location>
</feature>
<feature type="strand" evidence="5">
    <location>
        <begin position="30"/>
        <end position="34"/>
    </location>
</feature>
<feature type="turn" evidence="5">
    <location>
        <begin position="35"/>
        <end position="38"/>
    </location>
</feature>
<feature type="helix" evidence="5">
    <location>
        <begin position="41"/>
        <end position="50"/>
    </location>
</feature>
<feature type="strand" evidence="5">
    <location>
        <begin position="53"/>
        <end position="55"/>
    </location>
</feature>
<feature type="strand" evidence="4">
    <location>
        <begin position="56"/>
        <end position="58"/>
    </location>
</feature>
<accession>P62656</accession>
<dbReference type="EMBL" id="AE017221">
    <property type="protein sequence ID" value="AAS81657.1"/>
    <property type="molecule type" value="Genomic_DNA"/>
</dbReference>
<dbReference type="RefSeq" id="WP_008633399.1">
    <property type="nucleotide sequence ID" value="NC_005835.1"/>
</dbReference>
<dbReference type="PDB" id="4KVB">
    <property type="method" value="X-ray"/>
    <property type="resolution" value="4.20 A"/>
    <property type="chains" value="N=1-61"/>
</dbReference>
<dbReference type="PDB" id="4V4J">
    <property type="method" value="X-ray"/>
    <property type="resolution" value="3.83 A"/>
    <property type="chains" value="o=1-61"/>
</dbReference>
<dbReference type="PDB" id="4V63">
    <property type="method" value="X-ray"/>
    <property type="resolution" value="3.21 A"/>
    <property type="chains" value="AN/CN=1-61"/>
</dbReference>
<dbReference type="PDB" id="4V67">
    <property type="method" value="X-ray"/>
    <property type="resolution" value="3.00 A"/>
    <property type="chains" value="AN/CN=1-61"/>
</dbReference>
<dbReference type="PDB" id="4V7P">
    <property type="method" value="X-ray"/>
    <property type="resolution" value="3.62 A"/>
    <property type="chains" value="AN/DN=2-61"/>
</dbReference>
<dbReference type="PDB" id="4V83">
    <property type="method" value="X-ray"/>
    <property type="resolution" value="3.50 A"/>
    <property type="chains" value="AN/CN=2-61"/>
</dbReference>
<dbReference type="PDB" id="4V84">
    <property type="method" value="X-ray"/>
    <property type="resolution" value="3.40 A"/>
    <property type="chains" value="AN/CN=2-61"/>
</dbReference>
<dbReference type="PDB" id="4V9J">
    <property type="method" value="X-ray"/>
    <property type="resolution" value="3.86 A"/>
    <property type="chains" value="AN/CN=2-61"/>
</dbReference>
<dbReference type="PDB" id="4V9K">
    <property type="method" value="X-ray"/>
    <property type="resolution" value="3.50 A"/>
    <property type="chains" value="AN/CN=2-61"/>
</dbReference>
<dbReference type="PDB" id="4V9L">
    <property type="method" value="X-ray"/>
    <property type="resolution" value="3.50 A"/>
    <property type="chains" value="AN/CN=2-61"/>
</dbReference>
<dbReference type="PDB" id="4V9M">
    <property type="method" value="X-ray"/>
    <property type="resolution" value="4.00 A"/>
    <property type="chains" value="AN/CN=2-61"/>
</dbReference>
<dbReference type="PDB" id="4V9N">
    <property type="method" value="X-ray"/>
    <property type="resolution" value="3.40 A"/>
    <property type="chains" value="AN/CN=2-61"/>
</dbReference>
<dbReference type="PDB" id="4V9Q">
    <property type="method" value="X-ray"/>
    <property type="resolution" value="3.40 A"/>
    <property type="chains" value="BN/DN=2-61"/>
</dbReference>
<dbReference type="PDB" id="4W29">
    <property type="method" value="X-ray"/>
    <property type="resolution" value="3.80 A"/>
    <property type="chains" value="AN/CN=2-61"/>
</dbReference>
<dbReference type="PDB" id="4XEJ">
    <property type="method" value="X-ray"/>
    <property type="resolution" value="3.80 A"/>
    <property type="chains" value="AS14/BS14=2-61"/>
</dbReference>
<dbReference type="PDB" id="5J4D">
    <property type="method" value="X-ray"/>
    <property type="resolution" value="3.10 A"/>
    <property type="chains" value="BD/WA=1-61"/>
</dbReference>
<dbReference type="PDB" id="5V8I">
    <property type="method" value="X-ray"/>
    <property type="resolution" value="3.25 A"/>
    <property type="chains" value="1n/2n=1-61"/>
</dbReference>
<dbReference type="PDB" id="6B4V">
    <property type="method" value="X-ray"/>
    <property type="resolution" value="3.40 A"/>
    <property type="chains" value="AD/WA=1-61"/>
</dbReference>
<dbReference type="PDB" id="6BOH">
    <property type="method" value="X-ray"/>
    <property type="resolution" value="3.40 A"/>
    <property type="chains" value="CD/XA=1-61"/>
</dbReference>
<dbReference type="PDB" id="6BOK">
    <property type="method" value="X-ray"/>
    <property type="resolution" value="3.55 A"/>
    <property type="chains" value="VA/YC=1-61"/>
</dbReference>
<dbReference type="PDB" id="6N1D">
    <property type="method" value="X-ray"/>
    <property type="resolution" value="3.20 A"/>
    <property type="chains" value="AS14/BS14=2-61"/>
</dbReference>
<dbReference type="PDBsum" id="4KVB"/>
<dbReference type="PDBsum" id="4V4J"/>
<dbReference type="PDBsum" id="4V63"/>
<dbReference type="PDBsum" id="4V67"/>
<dbReference type="PDBsum" id="4V7P"/>
<dbReference type="PDBsum" id="4V83"/>
<dbReference type="PDBsum" id="4V84"/>
<dbReference type="PDBsum" id="4V9J"/>
<dbReference type="PDBsum" id="4V9K"/>
<dbReference type="PDBsum" id="4V9L"/>
<dbReference type="PDBsum" id="4V9M"/>
<dbReference type="PDBsum" id="4V9N"/>
<dbReference type="PDBsum" id="4V9Q"/>
<dbReference type="PDBsum" id="4W29"/>
<dbReference type="PDBsum" id="4XEJ"/>
<dbReference type="PDBsum" id="5J4D"/>
<dbReference type="PDBsum" id="5V8I"/>
<dbReference type="PDBsum" id="6B4V"/>
<dbReference type="PDBsum" id="6BOH"/>
<dbReference type="PDBsum" id="6BOK"/>
<dbReference type="PDBsum" id="6N1D"/>
<dbReference type="SMR" id="P62656"/>
<dbReference type="IntAct" id="P62656">
    <property type="interactions" value="4"/>
</dbReference>
<dbReference type="GeneID" id="3169802"/>
<dbReference type="KEGG" id="tth:TT_C1315"/>
<dbReference type="eggNOG" id="COG0199">
    <property type="taxonomic scope" value="Bacteria"/>
</dbReference>
<dbReference type="HOGENOM" id="CLU_139869_3_0_0"/>
<dbReference type="OrthoDB" id="9810484at2"/>
<dbReference type="EvolutionaryTrace" id="P62656"/>
<dbReference type="Proteomes" id="UP000000592">
    <property type="component" value="Chromosome"/>
</dbReference>
<dbReference type="GO" id="GO:0005737">
    <property type="term" value="C:cytoplasm"/>
    <property type="evidence" value="ECO:0007669"/>
    <property type="project" value="UniProtKB-ARBA"/>
</dbReference>
<dbReference type="GO" id="GO:0015935">
    <property type="term" value="C:small ribosomal subunit"/>
    <property type="evidence" value="ECO:0007669"/>
    <property type="project" value="TreeGrafter"/>
</dbReference>
<dbReference type="GO" id="GO:0019843">
    <property type="term" value="F:rRNA binding"/>
    <property type="evidence" value="ECO:0007669"/>
    <property type="project" value="UniProtKB-UniRule"/>
</dbReference>
<dbReference type="GO" id="GO:0003735">
    <property type="term" value="F:structural constituent of ribosome"/>
    <property type="evidence" value="ECO:0007669"/>
    <property type="project" value="InterPro"/>
</dbReference>
<dbReference type="GO" id="GO:0008270">
    <property type="term" value="F:zinc ion binding"/>
    <property type="evidence" value="ECO:0007669"/>
    <property type="project" value="UniProtKB-UniRule"/>
</dbReference>
<dbReference type="GO" id="GO:0006412">
    <property type="term" value="P:translation"/>
    <property type="evidence" value="ECO:0007669"/>
    <property type="project" value="UniProtKB-UniRule"/>
</dbReference>
<dbReference type="FunFam" id="4.10.830.10:FF:000001">
    <property type="entry name" value="30S ribosomal protein S14 type Z"/>
    <property type="match status" value="1"/>
</dbReference>
<dbReference type="Gene3D" id="4.10.830.10">
    <property type="entry name" value="30s Ribosomal Protein S14, Chain N"/>
    <property type="match status" value="1"/>
</dbReference>
<dbReference type="HAMAP" id="MF_01364_B">
    <property type="entry name" value="Ribosomal_uS14_2_B"/>
    <property type="match status" value="1"/>
</dbReference>
<dbReference type="InterPro" id="IPR001209">
    <property type="entry name" value="Ribosomal_uS14"/>
</dbReference>
<dbReference type="InterPro" id="IPR023053">
    <property type="entry name" value="Ribosomal_uS14_bact"/>
</dbReference>
<dbReference type="InterPro" id="IPR018271">
    <property type="entry name" value="Ribosomal_uS14_CS"/>
</dbReference>
<dbReference type="InterPro" id="IPR043140">
    <property type="entry name" value="Ribosomal_uS14_sf"/>
</dbReference>
<dbReference type="NCBIfam" id="NF005974">
    <property type="entry name" value="PRK08061.1"/>
    <property type="match status" value="1"/>
</dbReference>
<dbReference type="PANTHER" id="PTHR19836">
    <property type="entry name" value="30S RIBOSOMAL PROTEIN S14"/>
    <property type="match status" value="1"/>
</dbReference>
<dbReference type="PANTHER" id="PTHR19836:SF19">
    <property type="entry name" value="SMALL RIBOSOMAL SUBUNIT PROTEIN US14M"/>
    <property type="match status" value="1"/>
</dbReference>
<dbReference type="Pfam" id="PF00253">
    <property type="entry name" value="Ribosomal_S14"/>
    <property type="match status" value="1"/>
</dbReference>
<dbReference type="SUPFAM" id="SSF57716">
    <property type="entry name" value="Glucocorticoid receptor-like (DNA-binding domain)"/>
    <property type="match status" value="1"/>
</dbReference>
<dbReference type="PROSITE" id="PS00527">
    <property type="entry name" value="RIBOSOMAL_S14"/>
    <property type="match status" value="1"/>
</dbReference>
<gene>
    <name evidence="2" type="primary">rpsZ</name>
    <name evidence="2" type="synonym">rps14</name>
    <name evidence="2" type="synonym">rpsN</name>
    <name type="ordered locus">TT_C1315</name>
</gene>
<organism>
    <name type="scientific">Thermus thermophilus (strain ATCC BAA-163 / DSM 7039 / HB27)</name>
    <dbReference type="NCBI Taxonomy" id="262724"/>
    <lineage>
        <taxon>Bacteria</taxon>
        <taxon>Thermotogati</taxon>
        <taxon>Deinococcota</taxon>
        <taxon>Deinococci</taxon>
        <taxon>Thermales</taxon>
        <taxon>Thermaceae</taxon>
        <taxon>Thermus</taxon>
    </lineage>
</organism>
<comment type="function">
    <text evidence="2">Binds 16S rRNA, required for the assembly of 30S particles and may also be responsible for determining the conformation of the 16S rRNA at the A site.</text>
</comment>
<comment type="cofactor">
    <cofactor evidence="2">
        <name>Zn(2+)</name>
        <dbReference type="ChEBI" id="CHEBI:29105"/>
    </cofactor>
    <text evidence="2">Binds 1 zinc ion per subunit.</text>
</comment>
<comment type="subunit">
    <text evidence="2">Part of the 30S ribosomal subunit. Contacts proteins S3 and S10.</text>
</comment>
<comment type="similarity">
    <text evidence="2">Belongs to the universal ribosomal protein uS14 family. Zinc-binding uS14 subfamily.</text>
</comment>
<evidence type="ECO:0000250" key="1"/>
<evidence type="ECO:0000255" key="2">
    <source>
        <dbReference type="HAMAP-Rule" id="MF_01364"/>
    </source>
</evidence>
<evidence type="ECO:0000305" key="3"/>
<evidence type="ECO:0007829" key="4">
    <source>
        <dbReference type="PDB" id="4V63"/>
    </source>
</evidence>
<evidence type="ECO:0007829" key="5">
    <source>
        <dbReference type="PDB" id="4V67"/>
    </source>
</evidence>
<name>RS14Z_THET2</name>
<sequence>MARKALIEKAKRTPKFKVRAYTRCVRCGRARSVYRFFGLCRICLRELAHKGQLPGVRKASW</sequence>
<keyword id="KW-0002">3D-structure</keyword>
<keyword id="KW-0479">Metal-binding</keyword>
<keyword id="KW-0687">Ribonucleoprotein</keyword>
<keyword id="KW-0689">Ribosomal protein</keyword>
<keyword id="KW-0694">RNA-binding</keyword>
<keyword id="KW-0699">rRNA-binding</keyword>
<keyword id="KW-0862">Zinc</keyword>
<reference key="1">
    <citation type="journal article" date="2004" name="Nat. Biotechnol.">
        <title>The genome sequence of the extreme thermophile Thermus thermophilus.</title>
        <authorList>
            <person name="Henne A."/>
            <person name="Brueggemann H."/>
            <person name="Raasch C."/>
            <person name="Wiezer A."/>
            <person name="Hartsch T."/>
            <person name="Liesegang H."/>
            <person name="Johann A."/>
            <person name="Lienard T."/>
            <person name="Gohl O."/>
            <person name="Martinez-Arias R."/>
            <person name="Jacobi C."/>
            <person name="Starkuviene V."/>
            <person name="Schlenczeck S."/>
            <person name="Dencker S."/>
            <person name="Huber R."/>
            <person name="Klenk H.-P."/>
            <person name="Kramer W."/>
            <person name="Merkl R."/>
            <person name="Gottschalk G."/>
            <person name="Fritz H.-J."/>
        </authorList>
    </citation>
    <scope>NUCLEOTIDE SEQUENCE [LARGE SCALE GENOMIC DNA]</scope>
    <source>
        <strain>ATCC BAA-163 / DSM 7039 / HB27</strain>
    </source>
</reference>
<protein>
    <recommendedName>
        <fullName evidence="2">Small ribosomal subunit protein uS14</fullName>
    </recommendedName>
    <alternativeName>
        <fullName evidence="3">30S ribosomal protein S14 type Z</fullName>
    </alternativeName>
</protein>
<proteinExistence type="evidence at protein level"/>